<gene>
    <name evidence="1" type="primary">lpxB</name>
    <name type="ordered locus">KPK_4538</name>
</gene>
<reference key="1">
    <citation type="journal article" date="2008" name="PLoS Genet.">
        <title>Complete genome sequence of the N2-fixing broad host range endophyte Klebsiella pneumoniae 342 and virulence predictions verified in mice.</title>
        <authorList>
            <person name="Fouts D.E."/>
            <person name="Tyler H.L."/>
            <person name="DeBoy R.T."/>
            <person name="Daugherty S."/>
            <person name="Ren Q."/>
            <person name="Badger J.H."/>
            <person name="Durkin A.S."/>
            <person name="Huot H."/>
            <person name="Shrivastava S."/>
            <person name="Kothari S."/>
            <person name="Dodson R.J."/>
            <person name="Mohamoud Y."/>
            <person name="Khouri H."/>
            <person name="Roesch L.F.W."/>
            <person name="Krogfelt K.A."/>
            <person name="Struve C."/>
            <person name="Triplett E.W."/>
            <person name="Methe B.A."/>
        </authorList>
    </citation>
    <scope>NUCLEOTIDE SEQUENCE [LARGE SCALE GENOMIC DNA]</scope>
    <source>
        <strain>342</strain>
    </source>
</reference>
<sequence length="383" mass="42474">MAEPRPLTIALVAGETSGDILGAGLIRALKARIPDARFVGVAGPLMQAEGCEAWYEMEELAVMGIVEVLGRLRRLLHIRADLTRRFGELRPDVFVGIDAPDFNITLEGNLKKQGIKTIHYVSPSVWAWRQKRVFKIGRATDLVLAFLPFEKAFYDKFNVPCRFIGHTMADAMPLDPDKGAARDRLGIPHNVRCLALLPGSRGAEVEMLSADFLKTAQLLRVTYPDLQVVVPLVNAKRREQFERIKAETAPDMIVHMLDGQARDAMIASDAALLASGTAALECMLAKCPMVVGYRMKPFTFWLAKRLVKTDYVSLPNLLAGRELVKELLQDECEPQVLAAALQPLLADGKTSHEMHETFRALHQQIRCNADEQAADAVLELAKQ</sequence>
<name>LPXB_KLEP3</name>
<evidence type="ECO:0000255" key="1">
    <source>
        <dbReference type="HAMAP-Rule" id="MF_00392"/>
    </source>
</evidence>
<feature type="chain" id="PRO_1000123054" description="Lipid-A-disaccharide synthase">
    <location>
        <begin position="1"/>
        <end position="383"/>
    </location>
</feature>
<proteinExistence type="inferred from homology"/>
<comment type="function">
    <text evidence="1">Condensation of UDP-2,3-diacylglucosamine and 2,3-diacylglucosamine-1-phosphate to form lipid A disaccharide, a precursor of lipid A, a phosphorylated glycolipid that anchors the lipopolysaccharide to the outer membrane of the cell.</text>
</comment>
<comment type="catalytic activity">
    <reaction evidence="1">
        <text>2-N,3-O-bis[(3R)-3-hydroxytetradecanoyl]-alpha-D-glucosaminyl 1-phosphate + UDP-2-N,3-O-bis[(3R)-3-hydroxytetradecanoyl]-alpha-D-glucosamine = lipid A disaccharide (E. coli) + UDP + H(+)</text>
        <dbReference type="Rhea" id="RHEA:22668"/>
        <dbReference type="ChEBI" id="CHEBI:15378"/>
        <dbReference type="ChEBI" id="CHEBI:57957"/>
        <dbReference type="ChEBI" id="CHEBI:58223"/>
        <dbReference type="ChEBI" id="CHEBI:58466"/>
        <dbReference type="ChEBI" id="CHEBI:78847"/>
    </reaction>
</comment>
<comment type="catalytic activity">
    <reaction evidence="1">
        <text>a lipid X + a UDP-2-N,3-O-bis[(3R)-3-hydroxyacyl]-alpha-D-glucosamine = a lipid A disaccharide + UDP + H(+)</text>
        <dbReference type="Rhea" id="RHEA:67828"/>
        <dbReference type="ChEBI" id="CHEBI:15378"/>
        <dbReference type="ChEBI" id="CHEBI:58223"/>
        <dbReference type="ChEBI" id="CHEBI:137748"/>
        <dbReference type="ChEBI" id="CHEBI:176338"/>
        <dbReference type="ChEBI" id="CHEBI:176343"/>
        <dbReference type="EC" id="2.4.1.182"/>
    </reaction>
</comment>
<comment type="pathway">
    <text evidence="1">Glycolipid biosynthesis; lipid IV(A) biosynthesis; lipid IV(A) from (3R)-3-hydroxytetradecanoyl-[acyl-carrier-protein] and UDP-N-acetyl-alpha-D-glucosamine: step 5/6.</text>
</comment>
<comment type="similarity">
    <text evidence="1">Belongs to the LpxB family.</text>
</comment>
<organism>
    <name type="scientific">Klebsiella pneumoniae (strain 342)</name>
    <dbReference type="NCBI Taxonomy" id="507522"/>
    <lineage>
        <taxon>Bacteria</taxon>
        <taxon>Pseudomonadati</taxon>
        <taxon>Pseudomonadota</taxon>
        <taxon>Gammaproteobacteria</taxon>
        <taxon>Enterobacterales</taxon>
        <taxon>Enterobacteriaceae</taxon>
        <taxon>Klebsiella/Raoultella group</taxon>
        <taxon>Klebsiella</taxon>
        <taxon>Klebsiella pneumoniae complex</taxon>
    </lineage>
</organism>
<keyword id="KW-0328">Glycosyltransferase</keyword>
<keyword id="KW-0441">Lipid A biosynthesis</keyword>
<keyword id="KW-0444">Lipid biosynthesis</keyword>
<keyword id="KW-0443">Lipid metabolism</keyword>
<keyword id="KW-0808">Transferase</keyword>
<accession>B5Y1I9</accession>
<protein>
    <recommendedName>
        <fullName evidence="1">Lipid-A-disaccharide synthase</fullName>
        <ecNumber evidence="1">2.4.1.182</ecNumber>
    </recommendedName>
</protein>
<dbReference type="EC" id="2.4.1.182" evidence="1"/>
<dbReference type="EMBL" id="CP000964">
    <property type="protein sequence ID" value="ACI11127.1"/>
    <property type="molecule type" value="Genomic_DNA"/>
</dbReference>
<dbReference type="SMR" id="B5Y1I9"/>
<dbReference type="CAZy" id="GT19">
    <property type="family name" value="Glycosyltransferase Family 19"/>
</dbReference>
<dbReference type="KEGG" id="kpe:KPK_4538"/>
<dbReference type="HOGENOM" id="CLU_036577_3_0_6"/>
<dbReference type="UniPathway" id="UPA00359">
    <property type="reaction ID" value="UER00481"/>
</dbReference>
<dbReference type="Proteomes" id="UP000001734">
    <property type="component" value="Chromosome"/>
</dbReference>
<dbReference type="GO" id="GO:0016020">
    <property type="term" value="C:membrane"/>
    <property type="evidence" value="ECO:0007669"/>
    <property type="project" value="GOC"/>
</dbReference>
<dbReference type="GO" id="GO:0008915">
    <property type="term" value="F:lipid-A-disaccharide synthase activity"/>
    <property type="evidence" value="ECO:0007669"/>
    <property type="project" value="UniProtKB-UniRule"/>
</dbReference>
<dbReference type="GO" id="GO:0005543">
    <property type="term" value="F:phospholipid binding"/>
    <property type="evidence" value="ECO:0007669"/>
    <property type="project" value="TreeGrafter"/>
</dbReference>
<dbReference type="GO" id="GO:0009245">
    <property type="term" value="P:lipid A biosynthetic process"/>
    <property type="evidence" value="ECO:0007669"/>
    <property type="project" value="UniProtKB-UniRule"/>
</dbReference>
<dbReference type="CDD" id="cd01635">
    <property type="entry name" value="Glycosyltransferase_GTB-type"/>
    <property type="match status" value="1"/>
</dbReference>
<dbReference type="HAMAP" id="MF_00392">
    <property type="entry name" value="LpxB"/>
    <property type="match status" value="1"/>
</dbReference>
<dbReference type="InterPro" id="IPR003835">
    <property type="entry name" value="Glyco_trans_19"/>
</dbReference>
<dbReference type="NCBIfam" id="TIGR00215">
    <property type="entry name" value="lpxB"/>
    <property type="match status" value="1"/>
</dbReference>
<dbReference type="PANTHER" id="PTHR30372">
    <property type="entry name" value="LIPID-A-DISACCHARIDE SYNTHASE"/>
    <property type="match status" value="1"/>
</dbReference>
<dbReference type="PANTHER" id="PTHR30372:SF4">
    <property type="entry name" value="LIPID-A-DISACCHARIDE SYNTHASE, MITOCHONDRIAL-RELATED"/>
    <property type="match status" value="1"/>
</dbReference>
<dbReference type="Pfam" id="PF02684">
    <property type="entry name" value="LpxB"/>
    <property type="match status" value="1"/>
</dbReference>
<dbReference type="SUPFAM" id="SSF53756">
    <property type="entry name" value="UDP-Glycosyltransferase/glycogen phosphorylase"/>
    <property type="match status" value="1"/>
</dbReference>